<protein>
    <recommendedName>
        <fullName>Proline-rich membrane anchor 1</fullName>
        <shortName>PRiMA</shortName>
    </recommendedName>
</protein>
<accession>D3ZZP4</accession>
<accession>D4ACH8</accession>
<name>PRIMA_RAT</name>
<reference key="1">
    <citation type="submission" date="2008-04" db="EMBL/GenBank/DDBJ databases">
        <authorList>
            <person name="Kube M."/>
            <person name="Klages S."/>
            <person name="Kuhl H."/>
            <person name="Thiel J."/>
            <person name="Beck A."/>
            <person name="Reinhardt R."/>
        </authorList>
    </citation>
    <scope>NUCLEOTIDE SEQUENCE [LARGE SCALE MRNA] (ISOFORM 1)</scope>
</reference>
<reference key="2">
    <citation type="journal article" date="2009" name="Brain Res.">
        <title>Transcriptional regulation of proline-rich membrane anchor (PRiMA) of globular form acetylcholinesterase in neuron: an inductive effect of neuron differentiation.</title>
        <authorList>
            <person name="Xie H.Q."/>
            <person name="Choi R.C."/>
            <person name="Leung K.W."/>
            <person name="Chen V.P."/>
            <person name="Chu G.K."/>
            <person name="Tsim K.W."/>
        </authorList>
    </citation>
    <scope>TISSUE SPECIFICITY</scope>
</reference>
<reference key="3">
    <citation type="journal article" date="2010" name="J. Biol. Chem.">
        <title>Targeting acetylcholinesterase to membrane rafts: a function mediated by the proline-rich membrane anchor (PRiMA) in neurons.</title>
        <authorList>
            <person name="Xie H.Q."/>
            <person name="Liang D."/>
            <person name="Leung K.W."/>
            <person name="Chen V.P."/>
            <person name="Zhu K.Y."/>
            <person name="Chan W.K."/>
            <person name="Choi R.C."/>
            <person name="Massoulie J."/>
            <person name="Tsim K.W."/>
        </authorList>
    </citation>
    <scope>INTERACTION WITH ACHE TETRAMERS</scope>
    <scope>SUBCELLULAR LOCATION</scope>
    <scope>TISSUE SPECIFICITY</scope>
</reference>
<proteinExistence type="evidence at protein level"/>
<evidence type="ECO:0000250" key="1"/>
<evidence type="ECO:0000255" key="2"/>
<evidence type="ECO:0000256" key="3">
    <source>
        <dbReference type="SAM" id="MobiDB-lite"/>
    </source>
</evidence>
<evidence type="ECO:0000269" key="4">
    <source>
    </source>
</evidence>
<evidence type="ECO:0000269" key="5">
    <source>
    </source>
</evidence>
<evidence type="ECO:0000305" key="6"/>
<feature type="signal peptide" evidence="2">
    <location>
        <begin position="1"/>
        <end position="35"/>
    </location>
</feature>
<feature type="chain" id="PRO_0000410722" description="Proline-rich membrane anchor 1">
    <location>
        <begin position="36"/>
        <end position="153"/>
    </location>
</feature>
<feature type="topological domain" description="Extracellular" evidence="2">
    <location>
        <begin position="36"/>
        <end position="92"/>
    </location>
</feature>
<feature type="transmembrane region" description="Helical" evidence="2">
    <location>
        <begin position="93"/>
        <end position="113"/>
    </location>
</feature>
<feature type="topological domain" description="Cytoplasmic" evidence="2">
    <location>
        <begin position="114"/>
        <end position="153"/>
    </location>
</feature>
<feature type="domain" description="PRAD">
    <location>
        <begin position="56"/>
        <end position="70"/>
    </location>
</feature>
<feature type="region of interest" description="Disordered" evidence="3">
    <location>
        <begin position="59"/>
        <end position="79"/>
    </location>
</feature>
<feature type="region of interest" description="Disordered" evidence="3">
    <location>
        <begin position="133"/>
        <end position="153"/>
    </location>
</feature>
<feature type="compositionally biased region" description="Pro residues" evidence="3">
    <location>
        <begin position="59"/>
        <end position="71"/>
    </location>
</feature>
<feature type="glycosylation site" description="N-linked (GlcNAc...) asparagine" evidence="2">
    <location>
        <position position="79"/>
    </location>
</feature>
<feature type="splice variant" id="VSP_041497" description="In isoform 2." evidence="6">
    <original>KPLR</original>
    <variation>NQAI</variation>
    <location>
        <begin position="121"/>
        <end position="124"/>
    </location>
</feature>
<feature type="splice variant" id="VSP_041498" description="In isoform 2." evidence="6">
    <location>
        <begin position="125"/>
        <end position="153"/>
    </location>
</feature>
<sequence>MLLRDLVLRHGCCWPSLLLHCALHPLWGLVQVTHAEPQKSCSKVTDSCQHICQCRPPPPLPPPPPPPPPPRLLSAPAPNSTSCPAEDSWWSGLVIIVAVVCASLVFLTVLVIICYKAIKRKPLRKDENGASVAEYPMSSSPSNKGVDVNAAVV</sequence>
<dbReference type="EMBL" id="FM029865">
    <property type="status" value="NOT_ANNOTATED_CDS"/>
    <property type="molecule type" value="mRNA"/>
</dbReference>
<dbReference type="RefSeq" id="NP_001102191.2">
    <molecule id="D3ZZP4-1"/>
    <property type="nucleotide sequence ID" value="NM_001108721.2"/>
</dbReference>
<dbReference type="RefSeq" id="XP_006240557.1">
    <molecule id="D3ZZP4-1"/>
    <property type="nucleotide sequence ID" value="XM_006240495.5"/>
</dbReference>
<dbReference type="CORUM" id="D3ZZP4"/>
<dbReference type="FunCoup" id="D3ZZP4">
    <property type="interactions" value="1"/>
</dbReference>
<dbReference type="STRING" id="10116.ENSRNOP00000011906"/>
<dbReference type="GlyCosmos" id="D3ZZP4">
    <property type="glycosylation" value="1 site, No reported glycans"/>
</dbReference>
<dbReference type="GlyGen" id="D3ZZP4">
    <property type="glycosylation" value="1 site"/>
</dbReference>
<dbReference type="PhosphoSitePlus" id="D3ZZP4"/>
<dbReference type="PaxDb" id="10116-ENSRNOP00000011906"/>
<dbReference type="GeneID" id="690195"/>
<dbReference type="KEGG" id="rno:690195"/>
<dbReference type="AGR" id="RGD:1583978"/>
<dbReference type="CTD" id="145270"/>
<dbReference type="RGD" id="1583978">
    <property type="gene designation" value="Prima1"/>
</dbReference>
<dbReference type="VEuPathDB" id="HostDB:ENSRNOG00000008915"/>
<dbReference type="eggNOG" id="ENOG502S414">
    <property type="taxonomic scope" value="Eukaryota"/>
</dbReference>
<dbReference type="HOGENOM" id="CLU_144252_0_0_1"/>
<dbReference type="InParanoid" id="D3ZZP4"/>
<dbReference type="OrthoDB" id="64282at9989"/>
<dbReference type="TreeFam" id="TF337232"/>
<dbReference type="PRO" id="PR:D3ZZP4"/>
<dbReference type="Proteomes" id="UP000002494">
    <property type="component" value="Chromosome 6"/>
</dbReference>
<dbReference type="Bgee" id="ENSRNOG00000008915">
    <property type="expression patterns" value="Expressed in adult mammalian kidney and 15 other cell types or tissues"/>
</dbReference>
<dbReference type="GO" id="GO:0070161">
    <property type="term" value="C:anchoring junction"/>
    <property type="evidence" value="ECO:0007669"/>
    <property type="project" value="UniProtKB-SubCell"/>
</dbReference>
<dbReference type="GO" id="GO:0045121">
    <property type="term" value="C:membrane raft"/>
    <property type="evidence" value="ECO:0000314"/>
    <property type="project" value="RGD"/>
</dbReference>
<dbReference type="GO" id="GO:0005886">
    <property type="term" value="C:plasma membrane"/>
    <property type="evidence" value="ECO:0000266"/>
    <property type="project" value="RGD"/>
</dbReference>
<dbReference type="GO" id="GO:0045202">
    <property type="term" value="C:synapse"/>
    <property type="evidence" value="ECO:0007669"/>
    <property type="project" value="UniProtKB-SubCell"/>
</dbReference>
<dbReference type="GO" id="GO:0019899">
    <property type="term" value="F:enzyme binding"/>
    <property type="evidence" value="ECO:0000266"/>
    <property type="project" value="RGD"/>
</dbReference>
<dbReference type="GO" id="GO:0043495">
    <property type="term" value="F:protein-membrane adaptor activity"/>
    <property type="evidence" value="ECO:0000266"/>
    <property type="project" value="RGD"/>
</dbReference>
<dbReference type="GO" id="GO:0051649">
    <property type="term" value="P:establishment of localization in cell"/>
    <property type="evidence" value="ECO:0000266"/>
    <property type="project" value="RGD"/>
</dbReference>
<dbReference type="InterPro" id="IPR029659">
    <property type="entry name" value="PRIMA1"/>
</dbReference>
<dbReference type="Pfam" id="PF16101">
    <property type="entry name" value="PRIMA1"/>
    <property type="match status" value="1"/>
</dbReference>
<keyword id="KW-0025">Alternative splicing</keyword>
<keyword id="KW-0965">Cell junction</keyword>
<keyword id="KW-1003">Cell membrane</keyword>
<keyword id="KW-1015">Disulfide bond</keyword>
<keyword id="KW-0325">Glycoprotein</keyword>
<keyword id="KW-0472">Membrane</keyword>
<keyword id="KW-0531">Neurotransmitter degradation</keyword>
<keyword id="KW-1185">Reference proteome</keyword>
<keyword id="KW-0732">Signal</keyword>
<keyword id="KW-0770">Synapse</keyword>
<keyword id="KW-0812">Transmembrane</keyword>
<keyword id="KW-1133">Transmembrane helix</keyword>
<gene>
    <name type="primary">Prima1</name>
</gene>
<organism>
    <name type="scientific">Rattus norvegicus</name>
    <name type="common">Rat</name>
    <dbReference type="NCBI Taxonomy" id="10116"/>
    <lineage>
        <taxon>Eukaryota</taxon>
        <taxon>Metazoa</taxon>
        <taxon>Chordata</taxon>
        <taxon>Craniata</taxon>
        <taxon>Vertebrata</taxon>
        <taxon>Euteleostomi</taxon>
        <taxon>Mammalia</taxon>
        <taxon>Eutheria</taxon>
        <taxon>Euarchontoglires</taxon>
        <taxon>Glires</taxon>
        <taxon>Rodentia</taxon>
        <taxon>Myomorpha</taxon>
        <taxon>Muroidea</taxon>
        <taxon>Muridae</taxon>
        <taxon>Murinae</taxon>
        <taxon>Rattus</taxon>
    </lineage>
</organism>
<comment type="function">
    <text evidence="1">Required to anchor acetylcholinesterase (ACHE) to the basal lamina of the neuromuscular junction and to the membrane of neuronal synapses in brain. Organizes ACHE into tetramers (By similarity).</text>
</comment>
<comment type="subunit">
    <text evidence="5">Interacts with ACHE, probably through disulfide bonds.</text>
</comment>
<comment type="subcellular location">
    <subcellularLocation>
        <location evidence="5">Cell membrane</location>
        <topology evidence="5">Single-pass type I membrane protein</topology>
    </subcellularLocation>
    <subcellularLocation>
        <location evidence="1">Cell junction</location>
    </subcellularLocation>
    <subcellularLocation>
        <location evidence="1">Synapse</location>
    </subcellularLocation>
    <text>In the brain, PRIMA linked to ACHE is found in membrane rafts.</text>
</comment>
<comment type="alternative products">
    <event type="alternative splicing"/>
    <isoform>
        <id>D3ZZP4-1</id>
        <name>1</name>
        <name>Variant I</name>
        <sequence type="displayed"/>
    </isoform>
    <isoform>
        <id>D3ZZP4-2</id>
        <name>2</name>
        <name>Variant II</name>
        <sequence type="described" ref="VSP_041497 VSP_041498"/>
    </isoform>
</comment>
<comment type="tissue specificity">
    <text evidence="4 5">Isoforms 1 and 2 are expressed in the adult brain. In matured cortical neurons, only isoform 1 is detectable.</text>
</comment>
<comment type="developmental stage">
    <text>Up-regulated during the differentiation of in vitro cultured cortical neurons.</text>
</comment>
<comment type="domain">
    <text evidence="1">The proline-rich attachment domain (PRAD) binds the AChE catalytic subunits.</text>
</comment>